<proteinExistence type="evidence at protein level"/>
<dbReference type="PIR" id="A60625">
    <property type="entry name" value="A60625"/>
</dbReference>
<dbReference type="SMR" id="P34005"/>
<dbReference type="eggNOG" id="ENOG502R5GJ">
    <property type="taxonomic scope" value="Eukaryota"/>
</dbReference>
<dbReference type="GO" id="GO:0005615">
    <property type="term" value="C:extracellular space"/>
    <property type="evidence" value="ECO:0007669"/>
    <property type="project" value="InterPro"/>
</dbReference>
<dbReference type="GO" id="GO:0008083">
    <property type="term" value="F:growth factor activity"/>
    <property type="evidence" value="ECO:0007669"/>
    <property type="project" value="TreeGrafter"/>
</dbReference>
<dbReference type="GO" id="GO:0005131">
    <property type="term" value="F:growth hormone receptor binding"/>
    <property type="evidence" value="ECO:0007669"/>
    <property type="project" value="InterPro"/>
</dbReference>
<dbReference type="GO" id="GO:0005179">
    <property type="term" value="F:hormone activity"/>
    <property type="evidence" value="ECO:0007669"/>
    <property type="project" value="UniProtKB-KW"/>
</dbReference>
<dbReference type="GO" id="GO:0046872">
    <property type="term" value="F:metal ion binding"/>
    <property type="evidence" value="ECO:0007669"/>
    <property type="project" value="UniProtKB-KW"/>
</dbReference>
<dbReference type="GO" id="GO:0048513">
    <property type="term" value="P:animal organ development"/>
    <property type="evidence" value="ECO:0007669"/>
    <property type="project" value="TreeGrafter"/>
</dbReference>
<dbReference type="GO" id="GO:0060396">
    <property type="term" value="P:growth hormone receptor signaling pathway"/>
    <property type="evidence" value="ECO:0007669"/>
    <property type="project" value="TreeGrafter"/>
</dbReference>
<dbReference type="GO" id="GO:0045927">
    <property type="term" value="P:positive regulation of growth"/>
    <property type="evidence" value="ECO:0007669"/>
    <property type="project" value="TreeGrafter"/>
</dbReference>
<dbReference type="GO" id="GO:0046427">
    <property type="term" value="P:positive regulation of receptor signaling pathway via JAK-STAT"/>
    <property type="evidence" value="ECO:0007669"/>
    <property type="project" value="TreeGrafter"/>
</dbReference>
<dbReference type="GO" id="GO:0031667">
    <property type="term" value="P:response to nutrient levels"/>
    <property type="evidence" value="ECO:0007669"/>
    <property type="project" value="TreeGrafter"/>
</dbReference>
<dbReference type="CDD" id="cd10285">
    <property type="entry name" value="somatotropin_like"/>
    <property type="match status" value="1"/>
</dbReference>
<dbReference type="FunFam" id="1.20.1250.10:FF:000002">
    <property type="entry name" value="Growth hormone"/>
    <property type="match status" value="1"/>
</dbReference>
<dbReference type="Gene3D" id="1.20.1250.10">
    <property type="match status" value="1"/>
</dbReference>
<dbReference type="InterPro" id="IPR009079">
    <property type="entry name" value="4_helix_cytokine-like_core"/>
</dbReference>
<dbReference type="InterPro" id="IPR034975">
    <property type="entry name" value="Somatotropin"/>
</dbReference>
<dbReference type="InterPro" id="IPR001400">
    <property type="entry name" value="Somatotropin/Prolactin"/>
</dbReference>
<dbReference type="InterPro" id="IPR018116">
    <property type="entry name" value="Somatotropin_CS"/>
</dbReference>
<dbReference type="PANTHER" id="PTHR11417:SF2">
    <property type="entry name" value="SOMATOTROPIN"/>
    <property type="match status" value="1"/>
</dbReference>
<dbReference type="PANTHER" id="PTHR11417">
    <property type="entry name" value="SOMATOTROPIN,PROLACTIN"/>
    <property type="match status" value="1"/>
</dbReference>
<dbReference type="Pfam" id="PF00103">
    <property type="entry name" value="Hormone_1"/>
    <property type="match status" value="1"/>
</dbReference>
<dbReference type="PRINTS" id="PR00836">
    <property type="entry name" value="SOMATOTROPIN"/>
</dbReference>
<dbReference type="SUPFAM" id="SSF47266">
    <property type="entry name" value="4-helical cytokines"/>
    <property type="match status" value="1"/>
</dbReference>
<dbReference type="PROSITE" id="PS00266">
    <property type="entry name" value="SOMATOTROPIN_1"/>
    <property type="match status" value="1"/>
</dbReference>
<dbReference type="PROSITE" id="PS00338">
    <property type="entry name" value="SOMATOTROPIN_2"/>
    <property type="match status" value="1"/>
</dbReference>
<reference key="1">
    <citation type="journal article" date="1989" name="Gen. Comp. Endocrinol.">
        <title>The complete amino acid sequence of growth hormone from the sea turtle (Chelonia mydas).</title>
        <authorList>
            <person name="Yasuda A."/>
            <person name="Yamaguchi K."/>
            <person name="Papkoff H."/>
            <person name="Yokoo Y."/>
            <person name="Kawauchi H."/>
        </authorList>
    </citation>
    <scope>PROTEIN SEQUENCE</scope>
</reference>
<organism>
    <name type="scientific">Chelonia mydas</name>
    <name type="common">Green sea-turtle</name>
    <name type="synonym">Chelonia agassizi</name>
    <dbReference type="NCBI Taxonomy" id="8469"/>
    <lineage>
        <taxon>Eukaryota</taxon>
        <taxon>Metazoa</taxon>
        <taxon>Chordata</taxon>
        <taxon>Craniata</taxon>
        <taxon>Vertebrata</taxon>
        <taxon>Euteleostomi</taxon>
        <taxon>Archelosauria</taxon>
        <taxon>Testudinata</taxon>
        <taxon>Testudines</taxon>
        <taxon>Cryptodira</taxon>
        <taxon>Durocryptodira</taxon>
        <taxon>Americhelydia</taxon>
        <taxon>Chelonioidea</taxon>
        <taxon>Cheloniidae</taxon>
        <taxon>Chelonia</taxon>
    </lineage>
</organism>
<comment type="function">
    <text>Growth hormone plays an important role in growth control and is involved in the regulation of several anabolic processes. Implicated as an osmoregulatory substance important for seawater adaptation.</text>
</comment>
<comment type="subcellular location">
    <subcellularLocation>
        <location>Secreted</location>
    </subcellularLocation>
</comment>
<comment type="similarity">
    <text evidence="3">Belongs to the somatotropin/prolactin family.</text>
</comment>
<keyword id="KW-0903">Direct protein sequencing</keyword>
<keyword id="KW-1015">Disulfide bond</keyword>
<keyword id="KW-0372">Hormone</keyword>
<keyword id="KW-0479">Metal-binding</keyword>
<keyword id="KW-0964">Secreted</keyword>
<keyword id="KW-0862">Zinc</keyword>
<feature type="chain" id="PRO_0000181332" description="Somatotropin">
    <location>
        <begin position="1"/>
        <end position="191"/>
    </location>
</feature>
<feature type="binding site" evidence="1">
    <location>
        <position position="20"/>
    </location>
    <ligand>
        <name>Zn(2+)</name>
        <dbReference type="ChEBI" id="CHEBI:29105"/>
    </ligand>
</feature>
<feature type="binding site" evidence="1">
    <location>
        <position position="173"/>
    </location>
    <ligand>
        <name>Zn(2+)</name>
        <dbReference type="ChEBI" id="CHEBI:29105"/>
    </ligand>
</feature>
<feature type="disulfide bond" evidence="2">
    <location>
        <begin position="53"/>
        <end position="164"/>
    </location>
</feature>
<feature type="disulfide bond" evidence="2">
    <location>
        <begin position="181"/>
        <end position="189"/>
    </location>
</feature>
<gene>
    <name type="primary">GH</name>
</gene>
<accession>P34005</accession>
<name>SOMA_CHEMY</name>
<sequence length="191" mass="22050">AFPAMPLSSLFANAVLRAQHLHLLAADTYKEFERTYIPEEQRHSNKISQSASCYSETIPAPTGKDDAEQKSDMELLRFSLILIQSWLNPVQFLSRVFTNSLVFGTSDRVYEKLRDLEEGIQALMRELEDGSLRGFQVLRPTYDKFDINLRNEDALLKNYGLLSCFKKDLHKVETYLKLMKCRRFGESNCTI</sequence>
<evidence type="ECO:0000250" key="1"/>
<evidence type="ECO:0000269" key="2">
    <source>
    </source>
</evidence>
<evidence type="ECO:0000305" key="3"/>
<protein>
    <recommendedName>
        <fullName>Somatotropin</fullName>
    </recommendedName>
    <alternativeName>
        <fullName>Growth hormone</fullName>
    </alternativeName>
</protein>